<feature type="chain" id="PRO_0000322479" description="A-type ATP synthase subunit A">
    <location>
        <begin position="1"/>
        <end position="588"/>
    </location>
</feature>
<feature type="binding site" evidence="1">
    <location>
        <begin position="237"/>
        <end position="244"/>
    </location>
    <ligand>
        <name>ATP</name>
        <dbReference type="ChEBI" id="CHEBI:30616"/>
    </ligand>
</feature>
<keyword id="KW-0066">ATP synthesis</keyword>
<keyword id="KW-0067">ATP-binding</keyword>
<keyword id="KW-1003">Cell membrane</keyword>
<keyword id="KW-0375">Hydrogen ion transport</keyword>
<keyword id="KW-0406">Ion transport</keyword>
<keyword id="KW-0472">Membrane</keyword>
<keyword id="KW-0547">Nucleotide-binding</keyword>
<keyword id="KW-1185">Reference proteome</keyword>
<keyword id="KW-1278">Translocase</keyword>
<keyword id="KW-0813">Transport</keyword>
<name>AATA_METB6</name>
<accession>A7IAU8</accession>
<gene>
    <name evidence="1" type="primary">atpA</name>
    <name type="ordered locus">Mboo_2345</name>
</gene>
<proteinExistence type="inferred from homology"/>
<comment type="function">
    <text evidence="1">Component of the A-type ATP synthase that produces ATP from ADP in the presence of a proton gradient across the membrane. The A chain is the catalytic subunit.</text>
</comment>
<comment type="catalytic activity">
    <reaction evidence="1">
        <text>ATP + H2O + 4 H(+)(in) = ADP + phosphate + 5 H(+)(out)</text>
        <dbReference type="Rhea" id="RHEA:57720"/>
        <dbReference type="ChEBI" id="CHEBI:15377"/>
        <dbReference type="ChEBI" id="CHEBI:15378"/>
        <dbReference type="ChEBI" id="CHEBI:30616"/>
        <dbReference type="ChEBI" id="CHEBI:43474"/>
        <dbReference type="ChEBI" id="CHEBI:456216"/>
        <dbReference type="EC" id="7.1.2.2"/>
    </reaction>
</comment>
<comment type="subunit">
    <text evidence="1">Has multiple subunits with at least A(3), B(3), C, D, E, F, H, I and proteolipid K(x).</text>
</comment>
<comment type="subcellular location">
    <subcellularLocation>
        <location evidence="1">Cell membrane</location>
        <topology evidence="1">Peripheral membrane protein</topology>
    </subcellularLocation>
</comment>
<comment type="similarity">
    <text evidence="1">Belongs to the ATPase alpha/beta chains family.</text>
</comment>
<sequence>MEVKANQAKETKKGVLKRIAGPVVTAVNLDAHMYDVVRVGNEALMGEVIKIQGDNVIIQVYEDTTGIKPGEPVSNTGLSLAVELGPGLLTSIYDGIQRPLEVLVNKMGNFIERGVSAPGLSHEKKWTFKPVVKAGDKVEPGAILGEVQETNIVHKVMLPPNVKAGVVKTIKAGDFTVDEIIVILEDGREYPMIQRWPVRVPRPVKEKKNPTIPLLTGQRILDGLFPIAKGGTAAIPGPFGSGKTVTQQQLAKWSDAKIVVYIGCGERGNEMTEVLTEFPHLEDPTSGKPLMERTVLIANTSNMPVAAREASVYTGITIAEYFRDMGYDVSLMADSTSRWAEAMREISSRLEEMPGEEGYPAYLAARLSEFYERAGLVETLNHQSGSVSVIGAVSPPGGDFSEPVTQNTLRIVKVFWALDAKLSQRRHFPAINWLNSYSLYLDALHDWYDKNVSPDWNKLRSWAMGVLQKEAELQEIVQLVGSDALPETEQITIEVARMIREIFLQQNAYDAVDTFCDMQKQYDMMKAIRLYSDLANTAQAAGVSPAQITTIKAKNELPQIKFVKDYKQPLAKIEKDMDAEFNALRSAA</sequence>
<evidence type="ECO:0000255" key="1">
    <source>
        <dbReference type="HAMAP-Rule" id="MF_00309"/>
    </source>
</evidence>
<reference key="1">
    <citation type="journal article" date="2015" name="Microbiology">
        <title>Genome of Methanoregula boonei 6A8 reveals adaptations to oligotrophic peatland environments.</title>
        <authorList>
            <person name="Braeuer S."/>
            <person name="Cadillo-Quiroz H."/>
            <person name="Kyrpides N."/>
            <person name="Woyke T."/>
            <person name="Goodwin L."/>
            <person name="Detter C."/>
            <person name="Podell S."/>
            <person name="Yavitt J.B."/>
            <person name="Zinder S.H."/>
        </authorList>
    </citation>
    <scope>NUCLEOTIDE SEQUENCE [LARGE SCALE GENOMIC DNA]</scope>
    <source>
        <strain>DSM 21154 / JCM 14090 / 6A8</strain>
    </source>
</reference>
<organism>
    <name type="scientific">Methanoregula boonei (strain DSM 21154 / JCM 14090 / 6A8)</name>
    <dbReference type="NCBI Taxonomy" id="456442"/>
    <lineage>
        <taxon>Archaea</taxon>
        <taxon>Methanobacteriati</taxon>
        <taxon>Methanobacteriota</taxon>
        <taxon>Stenosarchaea group</taxon>
        <taxon>Methanomicrobia</taxon>
        <taxon>Methanomicrobiales</taxon>
        <taxon>Methanoregulaceae</taxon>
        <taxon>Methanoregula</taxon>
    </lineage>
</organism>
<protein>
    <recommendedName>
        <fullName evidence="1">A-type ATP synthase subunit A</fullName>
        <ecNumber evidence="1">7.1.2.2</ecNumber>
    </recommendedName>
</protein>
<dbReference type="EC" id="7.1.2.2" evidence="1"/>
<dbReference type="EMBL" id="CP000780">
    <property type="protein sequence ID" value="ABS56859.1"/>
    <property type="molecule type" value="Genomic_DNA"/>
</dbReference>
<dbReference type="RefSeq" id="WP_012107920.1">
    <property type="nucleotide sequence ID" value="NC_009712.1"/>
</dbReference>
<dbReference type="SMR" id="A7IAU8"/>
<dbReference type="STRING" id="456442.Mboo_2345"/>
<dbReference type="GeneID" id="5411874"/>
<dbReference type="KEGG" id="mbn:Mboo_2345"/>
<dbReference type="eggNOG" id="arCOG00868">
    <property type="taxonomic scope" value="Archaea"/>
</dbReference>
<dbReference type="HOGENOM" id="CLU_008162_3_1_2"/>
<dbReference type="OrthoDB" id="115235at2157"/>
<dbReference type="Proteomes" id="UP000002408">
    <property type="component" value="Chromosome"/>
</dbReference>
<dbReference type="GO" id="GO:0005886">
    <property type="term" value="C:plasma membrane"/>
    <property type="evidence" value="ECO:0007669"/>
    <property type="project" value="UniProtKB-SubCell"/>
</dbReference>
<dbReference type="GO" id="GO:0033178">
    <property type="term" value="C:proton-transporting two-sector ATPase complex, catalytic domain"/>
    <property type="evidence" value="ECO:0007669"/>
    <property type="project" value="InterPro"/>
</dbReference>
<dbReference type="GO" id="GO:0005524">
    <property type="term" value="F:ATP binding"/>
    <property type="evidence" value="ECO:0007669"/>
    <property type="project" value="UniProtKB-UniRule"/>
</dbReference>
<dbReference type="GO" id="GO:0046933">
    <property type="term" value="F:proton-transporting ATP synthase activity, rotational mechanism"/>
    <property type="evidence" value="ECO:0007669"/>
    <property type="project" value="UniProtKB-UniRule"/>
</dbReference>
<dbReference type="GO" id="GO:0046961">
    <property type="term" value="F:proton-transporting ATPase activity, rotational mechanism"/>
    <property type="evidence" value="ECO:0007669"/>
    <property type="project" value="InterPro"/>
</dbReference>
<dbReference type="GO" id="GO:0042777">
    <property type="term" value="P:proton motive force-driven plasma membrane ATP synthesis"/>
    <property type="evidence" value="ECO:0007669"/>
    <property type="project" value="UniProtKB-UniRule"/>
</dbReference>
<dbReference type="CDD" id="cd18111">
    <property type="entry name" value="ATP-synt_V_A-type_alpha_C"/>
    <property type="match status" value="1"/>
</dbReference>
<dbReference type="CDD" id="cd01134">
    <property type="entry name" value="V_A-ATPase_A"/>
    <property type="match status" value="1"/>
</dbReference>
<dbReference type="FunFam" id="3.40.50.300:FF:000675">
    <property type="entry name" value="V-type ATP synthase alpha chain"/>
    <property type="match status" value="1"/>
</dbReference>
<dbReference type="FunFam" id="1.10.1140.10:FF:000002">
    <property type="entry name" value="V-type proton ATPase catalytic subunit A"/>
    <property type="match status" value="1"/>
</dbReference>
<dbReference type="Gene3D" id="2.40.30.20">
    <property type="match status" value="1"/>
</dbReference>
<dbReference type="Gene3D" id="2.40.50.100">
    <property type="match status" value="1"/>
</dbReference>
<dbReference type="Gene3D" id="1.10.1140.10">
    <property type="entry name" value="Bovine Mitochondrial F1-atpase, Atp Synthase Beta Chain, Chain D, domain 3"/>
    <property type="match status" value="1"/>
</dbReference>
<dbReference type="Gene3D" id="3.40.50.300">
    <property type="entry name" value="P-loop containing nucleotide triphosphate hydrolases"/>
    <property type="match status" value="1"/>
</dbReference>
<dbReference type="HAMAP" id="MF_00309">
    <property type="entry name" value="ATP_synth_A_arch"/>
    <property type="match status" value="1"/>
</dbReference>
<dbReference type="InterPro" id="IPR055190">
    <property type="entry name" value="ATP-synt_VA_C"/>
</dbReference>
<dbReference type="InterPro" id="IPR031686">
    <property type="entry name" value="ATP-synth_a_Xtn"/>
</dbReference>
<dbReference type="InterPro" id="IPR023366">
    <property type="entry name" value="ATP_synth_asu-like_sf"/>
</dbReference>
<dbReference type="InterPro" id="IPR005726">
    <property type="entry name" value="ATP_synth_asu_arc"/>
</dbReference>
<dbReference type="InterPro" id="IPR020003">
    <property type="entry name" value="ATPase_a/bsu_AS"/>
</dbReference>
<dbReference type="InterPro" id="IPR004100">
    <property type="entry name" value="ATPase_F1/V1/A1_a/bsu_N"/>
</dbReference>
<dbReference type="InterPro" id="IPR036121">
    <property type="entry name" value="ATPase_F1/V1/A1_a/bsu_N_sf"/>
</dbReference>
<dbReference type="InterPro" id="IPR000194">
    <property type="entry name" value="ATPase_F1/V1/A1_a/bsu_nucl-bd"/>
</dbReference>
<dbReference type="InterPro" id="IPR024034">
    <property type="entry name" value="ATPase_F1/V1_b/a_C"/>
</dbReference>
<dbReference type="InterPro" id="IPR027417">
    <property type="entry name" value="P-loop_NTPase"/>
</dbReference>
<dbReference type="InterPro" id="IPR001763">
    <property type="entry name" value="Rhodanese-like_dom"/>
</dbReference>
<dbReference type="InterPro" id="IPR022878">
    <property type="entry name" value="V-ATPase_asu"/>
</dbReference>
<dbReference type="NCBIfam" id="TIGR01043">
    <property type="entry name" value="ATP_syn_A_arch"/>
    <property type="match status" value="1"/>
</dbReference>
<dbReference type="NCBIfam" id="NF003220">
    <property type="entry name" value="PRK04192.1"/>
    <property type="match status" value="1"/>
</dbReference>
<dbReference type="PANTHER" id="PTHR43607:SF1">
    <property type="entry name" value="H(+)-TRANSPORTING TWO-SECTOR ATPASE"/>
    <property type="match status" value="1"/>
</dbReference>
<dbReference type="PANTHER" id="PTHR43607">
    <property type="entry name" value="V-TYPE PROTON ATPASE CATALYTIC SUBUNIT A"/>
    <property type="match status" value="1"/>
</dbReference>
<dbReference type="Pfam" id="PF00006">
    <property type="entry name" value="ATP-synt_ab"/>
    <property type="match status" value="1"/>
</dbReference>
<dbReference type="Pfam" id="PF02874">
    <property type="entry name" value="ATP-synt_ab_N"/>
    <property type="match status" value="1"/>
</dbReference>
<dbReference type="Pfam" id="PF16886">
    <property type="entry name" value="ATP-synt_ab_Xtn"/>
    <property type="match status" value="1"/>
</dbReference>
<dbReference type="Pfam" id="PF22919">
    <property type="entry name" value="ATP-synt_VA_C"/>
    <property type="match status" value="1"/>
</dbReference>
<dbReference type="SUPFAM" id="SSF47917">
    <property type="entry name" value="C-terminal domain of alpha and beta subunits of F1 ATP synthase"/>
    <property type="match status" value="1"/>
</dbReference>
<dbReference type="SUPFAM" id="SSF50615">
    <property type="entry name" value="N-terminal domain of alpha and beta subunits of F1 ATP synthase"/>
    <property type="match status" value="1"/>
</dbReference>
<dbReference type="SUPFAM" id="SSF52540">
    <property type="entry name" value="P-loop containing nucleoside triphosphate hydrolases"/>
    <property type="match status" value="1"/>
</dbReference>
<dbReference type="PROSITE" id="PS00152">
    <property type="entry name" value="ATPASE_ALPHA_BETA"/>
    <property type="match status" value="1"/>
</dbReference>